<proteinExistence type="inferred from homology"/>
<sequence>MTQVAKKILVTCALPYANGSIHLGHMLEHIQADVWVRYQRMRGHEVNFICADDAHGTPIMLKAQQLGITPEQMIGEMSQEHQTDFAGFNISYDNYHSTHSEENRQLSELIYSRLKENGFIKNRTISQLYDPEKGMFLPDRFVKGTCPKCKSPDQYGDNCEVCGATYSPTELIEPKSVVSGATPVMRDSEHFFFDLPSFSEMLQAWTRSGALQEQVANKMQEWFESGLQQWDISRDAPYFGFEIPNAPGKYFYVWLDAPIGYMGSFKNLCDKRGDTTSFDEYWKKDSTAELYHFIGKDIVYFHSLFWPAMLEGSNFRKPTNLFVHGYVTVNGAKMSKSRGTFIKASTWLNHFDADSLRYYYTAKLSSRIDDIDLNLEDFVQRVNADIVNKVVNLASRNAGFINKRFDGVLASELADPQLYKTFTDAAEVIGEAWESREFGKAIREIMALADLANRYVDEQAPWVVAKQEGRDADLQAICSMGINLFRVLMTYLKPVLPKLTERAEAFLNTELTWHGIQQPLLGHKVNPFKALYNRIDMKQVEALVEASKEEVKAAATPVTGPLADDPIQETITFDDFAKVDLRVALIENAEFVEGSDKLLRLTLDLGGEKRNVFSGIRSAYPDPQALIGRHTIMVANLAPRKMRFGISEGMVMAAGPGGKDIFLLSPDAGAKPGHQVK</sequence>
<comment type="function">
    <text evidence="1">Is required not only for elongation of protein synthesis but also for the initiation of all mRNA translation through initiator tRNA(fMet) aminoacylation.</text>
</comment>
<comment type="catalytic activity">
    <reaction evidence="1">
        <text>tRNA(Met) + L-methionine + ATP = L-methionyl-tRNA(Met) + AMP + diphosphate</text>
        <dbReference type="Rhea" id="RHEA:13481"/>
        <dbReference type="Rhea" id="RHEA-COMP:9667"/>
        <dbReference type="Rhea" id="RHEA-COMP:9698"/>
        <dbReference type="ChEBI" id="CHEBI:30616"/>
        <dbReference type="ChEBI" id="CHEBI:33019"/>
        <dbReference type="ChEBI" id="CHEBI:57844"/>
        <dbReference type="ChEBI" id="CHEBI:78442"/>
        <dbReference type="ChEBI" id="CHEBI:78530"/>
        <dbReference type="ChEBI" id="CHEBI:456215"/>
        <dbReference type="EC" id="6.1.1.10"/>
    </reaction>
</comment>
<comment type="cofactor">
    <cofactor evidence="1">
        <name>Zn(2+)</name>
        <dbReference type="ChEBI" id="CHEBI:29105"/>
    </cofactor>
    <text evidence="1">Binds 1 zinc ion per subunit.</text>
</comment>
<comment type="subunit">
    <text evidence="1">Homodimer.</text>
</comment>
<comment type="subcellular location">
    <subcellularLocation>
        <location evidence="1">Cytoplasm</location>
    </subcellularLocation>
</comment>
<comment type="similarity">
    <text evidence="1">Belongs to the class-I aminoacyl-tRNA synthetase family. MetG type 1 subfamily.</text>
</comment>
<organism>
    <name type="scientific">Escherichia coli O17:K52:H18 (strain UMN026 / ExPEC)</name>
    <dbReference type="NCBI Taxonomy" id="585056"/>
    <lineage>
        <taxon>Bacteria</taxon>
        <taxon>Pseudomonadati</taxon>
        <taxon>Pseudomonadota</taxon>
        <taxon>Gammaproteobacteria</taxon>
        <taxon>Enterobacterales</taxon>
        <taxon>Enterobacteriaceae</taxon>
        <taxon>Escherichia</taxon>
    </lineage>
</organism>
<evidence type="ECO:0000255" key="1">
    <source>
        <dbReference type="HAMAP-Rule" id="MF_00098"/>
    </source>
</evidence>
<dbReference type="EC" id="6.1.1.10" evidence="1"/>
<dbReference type="EMBL" id="CU928163">
    <property type="protein sequence ID" value="CAR13634.1"/>
    <property type="molecule type" value="Genomic_DNA"/>
</dbReference>
<dbReference type="RefSeq" id="WP_001306372.1">
    <property type="nucleotide sequence ID" value="NC_011751.1"/>
</dbReference>
<dbReference type="RefSeq" id="YP_002413162.1">
    <property type="nucleotide sequence ID" value="NC_011751.1"/>
</dbReference>
<dbReference type="SMR" id="B7NCE4"/>
<dbReference type="STRING" id="585056.ECUMN_2446"/>
<dbReference type="KEGG" id="eum:ECUMN_2446"/>
<dbReference type="PATRIC" id="fig|585056.7.peg.2627"/>
<dbReference type="HOGENOM" id="CLU_009710_7_0_6"/>
<dbReference type="Proteomes" id="UP000007097">
    <property type="component" value="Chromosome"/>
</dbReference>
<dbReference type="GO" id="GO:0005829">
    <property type="term" value="C:cytosol"/>
    <property type="evidence" value="ECO:0007669"/>
    <property type="project" value="TreeGrafter"/>
</dbReference>
<dbReference type="GO" id="GO:0005524">
    <property type="term" value="F:ATP binding"/>
    <property type="evidence" value="ECO:0007669"/>
    <property type="project" value="UniProtKB-UniRule"/>
</dbReference>
<dbReference type="GO" id="GO:0046872">
    <property type="term" value="F:metal ion binding"/>
    <property type="evidence" value="ECO:0007669"/>
    <property type="project" value="UniProtKB-KW"/>
</dbReference>
<dbReference type="GO" id="GO:0004825">
    <property type="term" value="F:methionine-tRNA ligase activity"/>
    <property type="evidence" value="ECO:0007669"/>
    <property type="project" value="UniProtKB-UniRule"/>
</dbReference>
<dbReference type="GO" id="GO:0000049">
    <property type="term" value="F:tRNA binding"/>
    <property type="evidence" value="ECO:0007669"/>
    <property type="project" value="UniProtKB-KW"/>
</dbReference>
<dbReference type="GO" id="GO:0006431">
    <property type="term" value="P:methionyl-tRNA aminoacylation"/>
    <property type="evidence" value="ECO:0007669"/>
    <property type="project" value="UniProtKB-UniRule"/>
</dbReference>
<dbReference type="CDD" id="cd07957">
    <property type="entry name" value="Anticodon_Ia_Met"/>
    <property type="match status" value="1"/>
</dbReference>
<dbReference type="CDD" id="cd00814">
    <property type="entry name" value="MetRS_core"/>
    <property type="match status" value="1"/>
</dbReference>
<dbReference type="CDD" id="cd02800">
    <property type="entry name" value="tRNA_bind_EcMetRS_like"/>
    <property type="match status" value="1"/>
</dbReference>
<dbReference type="FunFam" id="1.10.730.10:FF:000005">
    <property type="entry name" value="Methionine--tRNA ligase"/>
    <property type="match status" value="1"/>
</dbReference>
<dbReference type="FunFam" id="2.20.28.20:FF:000001">
    <property type="entry name" value="Methionine--tRNA ligase"/>
    <property type="match status" value="1"/>
</dbReference>
<dbReference type="FunFam" id="2.40.50.140:FF:000042">
    <property type="entry name" value="Methionine--tRNA ligase"/>
    <property type="match status" value="1"/>
</dbReference>
<dbReference type="Gene3D" id="3.40.50.620">
    <property type="entry name" value="HUPs"/>
    <property type="match status" value="1"/>
</dbReference>
<dbReference type="Gene3D" id="1.10.730.10">
    <property type="entry name" value="Isoleucyl-tRNA Synthetase, Domain 1"/>
    <property type="match status" value="1"/>
</dbReference>
<dbReference type="Gene3D" id="2.20.28.20">
    <property type="entry name" value="Methionyl-tRNA synthetase, Zn-domain"/>
    <property type="match status" value="1"/>
</dbReference>
<dbReference type="Gene3D" id="2.40.50.140">
    <property type="entry name" value="Nucleic acid-binding proteins"/>
    <property type="match status" value="1"/>
</dbReference>
<dbReference type="HAMAP" id="MF_00098">
    <property type="entry name" value="Met_tRNA_synth_type1"/>
    <property type="match status" value="1"/>
</dbReference>
<dbReference type="InterPro" id="IPR001412">
    <property type="entry name" value="aa-tRNA-synth_I_CS"/>
</dbReference>
<dbReference type="InterPro" id="IPR041872">
    <property type="entry name" value="Anticodon_Met"/>
</dbReference>
<dbReference type="InterPro" id="IPR004495">
    <property type="entry name" value="Met-tRNA-synth_bsu_C"/>
</dbReference>
<dbReference type="InterPro" id="IPR023458">
    <property type="entry name" value="Met-tRNA_ligase_1"/>
</dbReference>
<dbReference type="InterPro" id="IPR014758">
    <property type="entry name" value="Met-tRNA_synth"/>
</dbReference>
<dbReference type="InterPro" id="IPR015413">
    <property type="entry name" value="Methionyl/Leucyl_tRNA_Synth"/>
</dbReference>
<dbReference type="InterPro" id="IPR033911">
    <property type="entry name" value="MetRS_core"/>
</dbReference>
<dbReference type="InterPro" id="IPR029038">
    <property type="entry name" value="MetRS_Zn"/>
</dbReference>
<dbReference type="InterPro" id="IPR012340">
    <property type="entry name" value="NA-bd_OB-fold"/>
</dbReference>
<dbReference type="InterPro" id="IPR014729">
    <property type="entry name" value="Rossmann-like_a/b/a_fold"/>
</dbReference>
<dbReference type="InterPro" id="IPR002547">
    <property type="entry name" value="tRNA-bd_dom"/>
</dbReference>
<dbReference type="InterPro" id="IPR009080">
    <property type="entry name" value="tRNAsynth_Ia_anticodon-bd"/>
</dbReference>
<dbReference type="NCBIfam" id="TIGR00398">
    <property type="entry name" value="metG"/>
    <property type="match status" value="1"/>
</dbReference>
<dbReference type="NCBIfam" id="TIGR00399">
    <property type="entry name" value="metG_C_term"/>
    <property type="match status" value="1"/>
</dbReference>
<dbReference type="NCBIfam" id="NF001100">
    <property type="entry name" value="PRK00133.1"/>
    <property type="match status" value="1"/>
</dbReference>
<dbReference type="PANTHER" id="PTHR45765">
    <property type="entry name" value="METHIONINE--TRNA LIGASE"/>
    <property type="match status" value="1"/>
</dbReference>
<dbReference type="PANTHER" id="PTHR45765:SF1">
    <property type="entry name" value="METHIONINE--TRNA LIGASE, CYTOPLASMIC"/>
    <property type="match status" value="1"/>
</dbReference>
<dbReference type="Pfam" id="PF19303">
    <property type="entry name" value="Anticodon_3"/>
    <property type="match status" value="1"/>
</dbReference>
<dbReference type="Pfam" id="PF09334">
    <property type="entry name" value="tRNA-synt_1g"/>
    <property type="match status" value="1"/>
</dbReference>
<dbReference type="Pfam" id="PF01588">
    <property type="entry name" value="tRNA_bind"/>
    <property type="match status" value="1"/>
</dbReference>
<dbReference type="PRINTS" id="PR01041">
    <property type="entry name" value="TRNASYNTHMET"/>
</dbReference>
<dbReference type="SUPFAM" id="SSF47323">
    <property type="entry name" value="Anticodon-binding domain of a subclass of class I aminoacyl-tRNA synthetases"/>
    <property type="match status" value="1"/>
</dbReference>
<dbReference type="SUPFAM" id="SSF57770">
    <property type="entry name" value="Methionyl-tRNA synthetase (MetRS), Zn-domain"/>
    <property type="match status" value="1"/>
</dbReference>
<dbReference type="SUPFAM" id="SSF50249">
    <property type="entry name" value="Nucleic acid-binding proteins"/>
    <property type="match status" value="1"/>
</dbReference>
<dbReference type="SUPFAM" id="SSF52374">
    <property type="entry name" value="Nucleotidylyl transferase"/>
    <property type="match status" value="1"/>
</dbReference>
<dbReference type="PROSITE" id="PS00178">
    <property type="entry name" value="AA_TRNA_LIGASE_I"/>
    <property type="match status" value="1"/>
</dbReference>
<dbReference type="PROSITE" id="PS50886">
    <property type="entry name" value="TRBD"/>
    <property type="match status" value="1"/>
</dbReference>
<keyword id="KW-0030">Aminoacyl-tRNA synthetase</keyword>
<keyword id="KW-0067">ATP-binding</keyword>
<keyword id="KW-0963">Cytoplasm</keyword>
<keyword id="KW-0436">Ligase</keyword>
<keyword id="KW-0479">Metal-binding</keyword>
<keyword id="KW-0547">Nucleotide-binding</keyword>
<keyword id="KW-0648">Protein biosynthesis</keyword>
<keyword id="KW-0694">RNA-binding</keyword>
<keyword id="KW-0820">tRNA-binding</keyword>
<keyword id="KW-0862">Zinc</keyword>
<reference key="1">
    <citation type="journal article" date="2009" name="PLoS Genet.">
        <title>Organised genome dynamics in the Escherichia coli species results in highly diverse adaptive paths.</title>
        <authorList>
            <person name="Touchon M."/>
            <person name="Hoede C."/>
            <person name="Tenaillon O."/>
            <person name="Barbe V."/>
            <person name="Baeriswyl S."/>
            <person name="Bidet P."/>
            <person name="Bingen E."/>
            <person name="Bonacorsi S."/>
            <person name="Bouchier C."/>
            <person name="Bouvet O."/>
            <person name="Calteau A."/>
            <person name="Chiapello H."/>
            <person name="Clermont O."/>
            <person name="Cruveiller S."/>
            <person name="Danchin A."/>
            <person name="Diard M."/>
            <person name="Dossat C."/>
            <person name="Karoui M.E."/>
            <person name="Frapy E."/>
            <person name="Garry L."/>
            <person name="Ghigo J.M."/>
            <person name="Gilles A.M."/>
            <person name="Johnson J."/>
            <person name="Le Bouguenec C."/>
            <person name="Lescat M."/>
            <person name="Mangenot S."/>
            <person name="Martinez-Jehanne V."/>
            <person name="Matic I."/>
            <person name="Nassif X."/>
            <person name="Oztas S."/>
            <person name="Petit M.A."/>
            <person name="Pichon C."/>
            <person name="Rouy Z."/>
            <person name="Ruf C.S."/>
            <person name="Schneider D."/>
            <person name="Tourret J."/>
            <person name="Vacherie B."/>
            <person name="Vallenet D."/>
            <person name="Medigue C."/>
            <person name="Rocha E.P.C."/>
            <person name="Denamur E."/>
        </authorList>
    </citation>
    <scope>NUCLEOTIDE SEQUENCE [LARGE SCALE GENOMIC DNA]</scope>
    <source>
        <strain>UMN026 / ExPEC</strain>
    </source>
</reference>
<gene>
    <name evidence="1" type="primary">metG</name>
    <name type="ordered locus">ECUMN_2446</name>
</gene>
<protein>
    <recommendedName>
        <fullName evidence="1">Methionine--tRNA ligase</fullName>
        <ecNumber evidence="1">6.1.1.10</ecNumber>
    </recommendedName>
    <alternativeName>
        <fullName evidence="1">Methionyl-tRNA synthetase</fullName>
        <shortName evidence="1">MetRS</shortName>
    </alternativeName>
</protein>
<accession>B7NCE4</accession>
<name>SYM_ECOLU</name>
<feature type="chain" id="PRO_1000199286" description="Methionine--tRNA ligase">
    <location>
        <begin position="1"/>
        <end position="677"/>
    </location>
</feature>
<feature type="domain" description="tRNA-binding" evidence="1">
    <location>
        <begin position="575"/>
        <end position="677"/>
    </location>
</feature>
<feature type="short sequence motif" description="'HIGH' region">
    <location>
        <begin position="15"/>
        <end position="25"/>
    </location>
</feature>
<feature type="short sequence motif" description="'KMSKS' region">
    <location>
        <begin position="333"/>
        <end position="337"/>
    </location>
</feature>
<feature type="binding site" evidence="1">
    <location>
        <position position="146"/>
    </location>
    <ligand>
        <name>Zn(2+)</name>
        <dbReference type="ChEBI" id="CHEBI:29105"/>
    </ligand>
</feature>
<feature type="binding site" evidence="1">
    <location>
        <position position="149"/>
    </location>
    <ligand>
        <name>Zn(2+)</name>
        <dbReference type="ChEBI" id="CHEBI:29105"/>
    </ligand>
</feature>
<feature type="binding site" evidence="1">
    <location>
        <position position="159"/>
    </location>
    <ligand>
        <name>Zn(2+)</name>
        <dbReference type="ChEBI" id="CHEBI:29105"/>
    </ligand>
</feature>
<feature type="binding site" evidence="1">
    <location>
        <position position="162"/>
    </location>
    <ligand>
        <name>Zn(2+)</name>
        <dbReference type="ChEBI" id="CHEBI:29105"/>
    </ligand>
</feature>
<feature type="binding site" evidence="1">
    <location>
        <position position="336"/>
    </location>
    <ligand>
        <name>ATP</name>
        <dbReference type="ChEBI" id="CHEBI:30616"/>
    </ligand>
</feature>